<protein>
    <recommendedName>
        <fullName evidence="1">Large ribosomal subunit protein uL4</fullName>
    </recommendedName>
    <alternativeName>
        <fullName evidence="3">50S ribosomal protein L4</fullName>
    </alternativeName>
</protein>
<accession>A7GJ73</accession>
<name>RL4_CLOBL</name>
<reference key="1">
    <citation type="submission" date="2007-06" db="EMBL/GenBank/DDBJ databases">
        <authorList>
            <person name="Brinkac L.M."/>
            <person name="Daugherty S."/>
            <person name="Dodson R.J."/>
            <person name="Madupu R."/>
            <person name="Brown J.L."/>
            <person name="Bruce D."/>
            <person name="Detter C."/>
            <person name="Munk C."/>
            <person name="Smith L.A."/>
            <person name="Smith T.J."/>
            <person name="White O."/>
            <person name="Brettin T.S."/>
        </authorList>
    </citation>
    <scope>NUCLEOTIDE SEQUENCE [LARGE SCALE GENOMIC DNA]</scope>
    <source>
        <strain>Langeland / NCTC 10281 / Type F</strain>
    </source>
</reference>
<evidence type="ECO:0000255" key="1">
    <source>
        <dbReference type="HAMAP-Rule" id="MF_01328"/>
    </source>
</evidence>
<evidence type="ECO:0000256" key="2">
    <source>
        <dbReference type="SAM" id="MobiDB-lite"/>
    </source>
</evidence>
<evidence type="ECO:0000305" key="3"/>
<dbReference type="EMBL" id="CP000728">
    <property type="protein sequence ID" value="ABS42363.1"/>
    <property type="molecule type" value="Genomic_DNA"/>
</dbReference>
<dbReference type="RefSeq" id="WP_003357518.1">
    <property type="nucleotide sequence ID" value="NC_009699.1"/>
</dbReference>
<dbReference type="SMR" id="A7GJ73"/>
<dbReference type="GeneID" id="5187777"/>
<dbReference type="KEGG" id="cbf:CLI_3662"/>
<dbReference type="HOGENOM" id="CLU_041575_5_2_9"/>
<dbReference type="Proteomes" id="UP000002410">
    <property type="component" value="Chromosome"/>
</dbReference>
<dbReference type="GO" id="GO:1990904">
    <property type="term" value="C:ribonucleoprotein complex"/>
    <property type="evidence" value="ECO:0007669"/>
    <property type="project" value="UniProtKB-KW"/>
</dbReference>
<dbReference type="GO" id="GO:0005840">
    <property type="term" value="C:ribosome"/>
    <property type="evidence" value="ECO:0007669"/>
    <property type="project" value="UniProtKB-KW"/>
</dbReference>
<dbReference type="GO" id="GO:0019843">
    <property type="term" value="F:rRNA binding"/>
    <property type="evidence" value="ECO:0007669"/>
    <property type="project" value="UniProtKB-UniRule"/>
</dbReference>
<dbReference type="GO" id="GO:0003735">
    <property type="term" value="F:structural constituent of ribosome"/>
    <property type="evidence" value="ECO:0007669"/>
    <property type="project" value="InterPro"/>
</dbReference>
<dbReference type="GO" id="GO:0006412">
    <property type="term" value="P:translation"/>
    <property type="evidence" value="ECO:0007669"/>
    <property type="project" value="UniProtKB-UniRule"/>
</dbReference>
<dbReference type="FunFam" id="3.40.1370.10:FF:000003">
    <property type="entry name" value="50S ribosomal protein L4"/>
    <property type="match status" value="1"/>
</dbReference>
<dbReference type="Gene3D" id="3.40.1370.10">
    <property type="match status" value="1"/>
</dbReference>
<dbReference type="HAMAP" id="MF_01328_B">
    <property type="entry name" value="Ribosomal_uL4_B"/>
    <property type="match status" value="1"/>
</dbReference>
<dbReference type="InterPro" id="IPR002136">
    <property type="entry name" value="Ribosomal_uL4"/>
</dbReference>
<dbReference type="InterPro" id="IPR013005">
    <property type="entry name" value="Ribosomal_uL4-like"/>
</dbReference>
<dbReference type="InterPro" id="IPR023574">
    <property type="entry name" value="Ribosomal_uL4_dom_sf"/>
</dbReference>
<dbReference type="NCBIfam" id="TIGR03953">
    <property type="entry name" value="rplD_bact"/>
    <property type="match status" value="1"/>
</dbReference>
<dbReference type="PANTHER" id="PTHR10746">
    <property type="entry name" value="50S RIBOSOMAL PROTEIN L4"/>
    <property type="match status" value="1"/>
</dbReference>
<dbReference type="PANTHER" id="PTHR10746:SF6">
    <property type="entry name" value="LARGE RIBOSOMAL SUBUNIT PROTEIN UL4M"/>
    <property type="match status" value="1"/>
</dbReference>
<dbReference type="Pfam" id="PF00573">
    <property type="entry name" value="Ribosomal_L4"/>
    <property type="match status" value="1"/>
</dbReference>
<dbReference type="SUPFAM" id="SSF52166">
    <property type="entry name" value="Ribosomal protein L4"/>
    <property type="match status" value="1"/>
</dbReference>
<keyword id="KW-0687">Ribonucleoprotein</keyword>
<keyword id="KW-0689">Ribosomal protein</keyword>
<keyword id="KW-0694">RNA-binding</keyword>
<keyword id="KW-0699">rRNA-binding</keyword>
<comment type="function">
    <text evidence="1">One of the primary rRNA binding proteins, this protein initially binds near the 5'-end of the 23S rRNA. It is important during the early stages of 50S assembly. It makes multiple contacts with different domains of the 23S rRNA in the assembled 50S subunit and ribosome.</text>
</comment>
<comment type="function">
    <text evidence="1">Forms part of the polypeptide exit tunnel.</text>
</comment>
<comment type="subunit">
    <text evidence="1">Part of the 50S ribosomal subunit.</text>
</comment>
<comment type="similarity">
    <text evidence="1">Belongs to the universal ribosomal protein uL4 family.</text>
</comment>
<organism>
    <name type="scientific">Clostridium botulinum (strain Langeland / NCTC 10281 / Type F)</name>
    <dbReference type="NCBI Taxonomy" id="441772"/>
    <lineage>
        <taxon>Bacteria</taxon>
        <taxon>Bacillati</taxon>
        <taxon>Bacillota</taxon>
        <taxon>Clostridia</taxon>
        <taxon>Eubacteriales</taxon>
        <taxon>Clostridiaceae</taxon>
        <taxon>Clostridium</taxon>
    </lineage>
</organism>
<feature type="chain" id="PRO_1000052384" description="Large ribosomal subunit protein uL4">
    <location>
        <begin position="1"/>
        <end position="206"/>
    </location>
</feature>
<feature type="region of interest" description="Disordered" evidence="2">
    <location>
        <begin position="47"/>
        <end position="75"/>
    </location>
</feature>
<gene>
    <name evidence="1" type="primary">rplD</name>
    <name type="ordered locus">CLI_3662</name>
</gene>
<sequence length="206" mass="22868">MPKVDLFNQNGEKVGDLQLADSVFGVEVNTYAMHQVVKALLANKRQGTQSAKTRAEVSGGGIKPWRQKGTGRARQGSIRAPQWIHGGVVFAPKPRDYRMSIPKSMKKVAIKSALTSKVNENLMVVVDEIKLETPKTKEVVKMLNSFNAKKTLIITNNAEENVYKSARNIEGVQIIPVNNINVYDVLKYDKVVITKDAVSKIEEVYA</sequence>
<proteinExistence type="inferred from homology"/>